<gene>
    <name evidence="1" type="primary">ubiD</name>
    <name type="ordered locus">YpsIP31758_0280</name>
</gene>
<organism>
    <name type="scientific">Yersinia pseudotuberculosis serotype O:1b (strain IP 31758)</name>
    <dbReference type="NCBI Taxonomy" id="349747"/>
    <lineage>
        <taxon>Bacteria</taxon>
        <taxon>Pseudomonadati</taxon>
        <taxon>Pseudomonadota</taxon>
        <taxon>Gammaproteobacteria</taxon>
        <taxon>Enterobacterales</taxon>
        <taxon>Yersiniaceae</taxon>
        <taxon>Yersinia</taxon>
    </lineage>
</organism>
<accession>A7FDE9</accession>
<comment type="function">
    <text evidence="1">Catalyzes the decarboxylation of 3-octaprenyl-4-hydroxy benzoate to 2-octaprenylphenol, an intermediate step in ubiquinone biosynthesis.</text>
</comment>
<comment type="catalytic activity">
    <reaction evidence="1">
        <text>a 4-hydroxy-3-(all-trans-polyprenyl)benzoate + H(+) = a 2-(all-trans-polyprenyl)phenol + CO2</text>
        <dbReference type="Rhea" id="RHEA:41680"/>
        <dbReference type="Rhea" id="RHEA-COMP:9514"/>
        <dbReference type="Rhea" id="RHEA-COMP:9516"/>
        <dbReference type="ChEBI" id="CHEBI:1269"/>
        <dbReference type="ChEBI" id="CHEBI:15378"/>
        <dbReference type="ChEBI" id="CHEBI:16526"/>
        <dbReference type="ChEBI" id="CHEBI:78396"/>
        <dbReference type="EC" id="4.1.1.98"/>
    </reaction>
</comment>
<comment type="cofactor">
    <cofactor evidence="1">
        <name>prenylated FMN</name>
        <dbReference type="ChEBI" id="CHEBI:87746"/>
    </cofactor>
    <text evidence="1">Binds 1 prenylated FMN per subunit.</text>
</comment>
<comment type="cofactor">
    <cofactor evidence="1">
        <name>Mn(2+)</name>
        <dbReference type="ChEBI" id="CHEBI:29035"/>
    </cofactor>
</comment>
<comment type="pathway">
    <text evidence="1">Cofactor biosynthesis; ubiquinone biosynthesis.</text>
</comment>
<comment type="subunit">
    <text evidence="1">Homohexamer.</text>
</comment>
<comment type="subcellular location">
    <subcellularLocation>
        <location evidence="1">Cell membrane</location>
        <topology evidence="1">Peripheral membrane protein</topology>
    </subcellularLocation>
</comment>
<comment type="similarity">
    <text evidence="1">Belongs to the UbiD family.</text>
</comment>
<comment type="sequence caution" evidence="2">
    <conflict type="erroneous initiation">
        <sequence resource="EMBL-CDS" id="ABS47567"/>
    </conflict>
</comment>
<proteinExistence type="inferred from homology"/>
<sequence length="495" mass="55965">MKYRDLRDFLSLLEQRGELKRISQPIDPYLEMTEIADRTLRAGGPALLFENPKGYSMPVLCNLFGTAKRVAMGMGQEDVSALRDVGKLLAFLKEPDPPKGFRDLFDKLPKFKQVLNMPTKRLNSAPCQEQVWQGEDVDLSRIPVMHCWPEDAAPLVSWGLTITRGPHKERQNLGIYRQQVLGKNKLIMRWLSHRGGALDYQEWCEAHPGERFPVAVALGADPATILAAVTPVPDTLSEYAFAGLLRGHKTEVVKCLSNDLEVPASAEIVLEGYIEQGDMAPEGPYGDHTGYYNEIDNFPVFTVTHITQRQDAIYHSTYTGRPPDEPAVMGVALNEVFVPILQKQFPEIVDFYLPPEGCSYRLAVVTIKKQYAGHAKRVMMGVWSFLRQFMYTKFVIVCDDDINARDWNDVIWAITTRMDPSRDTVLIENTPIDYLDFASPVSGLGSKMGLDATNKWPAETPREWGRPIKMDEDVRARIDALWDELAIFSDKDAKR</sequence>
<name>UBID_YERP3</name>
<dbReference type="EC" id="4.1.1.98" evidence="1"/>
<dbReference type="EMBL" id="CP000720">
    <property type="protein sequence ID" value="ABS47567.1"/>
    <property type="status" value="ALT_INIT"/>
    <property type="molecule type" value="Genomic_DNA"/>
</dbReference>
<dbReference type="SMR" id="A7FDE9"/>
<dbReference type="KEGG" id="ypi:YpsIP31758_0280"/>
<dbReference type="HOGENOM" id="CLU_023348_4_1_6"/>
<dbReference type="UniPathway" id="UPA00232"/>
<dbReference type="Proteomes" id="UP000002412">
    <property type="component" value="Chromosome"/>
</dbReference>
<dbReference type="GO" id="GO:0005829">
    <property type="term" value="C:cytosol"/>
    <property type="evidence" value="ECO:0007669"/>
    <property type="project" value="TreeGrafter"/>
</dbReference>
<dbReference type="GO" id="GO:0005886">
    <property type="term" value="C:plasma membrane"/>
    <property type="evidence" value="ECO:0007669"/>
    <property type="project" value="UniProtKB-SubCell"/>
</dbReference>
<dbReference type="GO" id="GO:0008694">
    <property type="term" value="F:3-octaprenyl-4-hydroxybenzoate carboxy-lyase activity"/>
    <property type="evidence" value="ECO:0007669"/>
    <property type="project" value="UniProtKB-UniRule"/>
</dbReference>
<dbReference type="GO" id="GO:0046872">
    <property type="term" value="F:metal ion binding"/>
    <property type="evidence" value="ECO:0007669"/>
    <property type="project" value="UniProtKB-KW"/>
</dbReference>
<dbReference type="GO" id="GO:0006744">
    <property type="term" value="P:ubiquinone biosynthetic process"/>
    <property type="evidence" value="ECO:0007669"/>
    <property type="project" value="UniProtKB-UniRule"/>
</dbReference>
<dbReference type="FunFam" id="1.20.5.570:FF:000001">
    <property type="entry name" value="3-octaprenyl-4-hydroxybenzoate carboxy-lyase"/>
    <property type="match status" value="1"/>
</dbReference>
<dbReference type="FunFam" id="3.40.1670.10:FF:000001">
    <property type="entry name" value="3-octaprenyl-4-hydroxybenzoate carboxy-lyase"/>
    <property type="match status" value="1"/>
</dbReference>
<dbReference type="Gene3D" id="1.20.5.570">
    <property type="entry name" value="Single helix bin"/>
    <property type="match status" value="1"/>
</dbReference>
<dbReference type="Gene3D" id="3.40.1670.10">
    <property type="entry name" value="UbiD C-terminal domain-like"/>
    <property type="match status" value="1"/>
</dbReference>
<dbReference type="HAMAP" id="MF_01636">
    <property type="entry name" value="UbiD"/>
    <property type="match status" value="1"/>
</dbReference>
<dbReference type="InterPro" id="IPR002830">
    <property type="entry name" value="UbiD"/>
</dbReference>
<dbReference type="InterPro" id="IPR049381">
    <property type="entry name" value="UbiD-like_C"/>
</dbReference>
<dbReference type="InterPro" id="IPR049383">
    <property type="entry name" value="UbiD-like_N"/>
</dbReference>
<dbReference type="InterPro" id="IPR023677">
    <property type="entry name" value="UbiD_bacteria"/>
</dbReference>
<dbReference type="InterPro" id="IPR048304">
    <property type="entry name" value="UbiD_Rift_dom"/>
</dbReference>
<dbReference type="NCBIfam" id="NF008175">
    <property type="entry name" value="PRK10922.1"/>
    <property type="match status" value="1"/>
</dbReference>
<dbReference type="NCBIfam" id="TIGR00148">
    <property type="entry name" value="UbiD family decarboxylase"/>
    <property type="match status" value="1"/>
</dbReference>
<dbReference type="PANTHER" id="PTHR30108">
    <property type="entry name" value="3-OCTAPRENYL-4-HYDROXYBENZOATE CARBOXY-LYASE-RELATED"/>
    <property type="match status" value="1"/>
</dbReference>
<dbReference type="PANTHER" id="PTHR30108:SF17">
    <property type="entry name" value="FERULIC ACID DECARBOXYLASE 1"/>
    <property type="match status" value="1"/>
</dbReference>
<dbReference type="Pfam" id="PF01977">
    <property type="entry name" value="UbiD"/>
    <property type="match status" value="1"/>
</dbReference>
<dbReference type="Pfam" id="PF20696">
    <property type="entry name" value="UbiD_C"/>
    <property type="match status" value="1"/>
</dbReference>
<dbReference type="Pfam" id="PF20695">
    <property type="entry name" value="UbiD_N"/>
    <property type="match status" value="1"/>
</dbReference>
<dbReference type="SUPFAM" id="SSF50475">
    <property type="entry name" value="FMN-binding split barrel"/>
    <property type="match status" value="1"/>
</dbReference>
<dbReference type="SUPFAM" id="SSF143968">
    <property type="entry name" value="UbiD C-terminal domain-like"/>
    <property type="match status" value="1"/>
</dbReference>
<evidence type="ECO:0000255" key="1">
    <source>
        <dbReference type="HAMAP-Rule" id="MF_01636"/>
    </source>
</evidence>
<evidence type="ECO:0000305" key="2"/>
<feature type="chain" id="PRO_0000335872" description="3-octaprenyl-4-hydroxybenzoate carboxy-lyase">
    <location>
        <begin position="1"/>
        <end position="495"/>
    </location>
</feature>
<feature type="active site" description="Proton donor" evidence="1">
    <location>
        <position position="287"/>
    </location>
</feature>
<feature type="binding site" evidence="1">
    <location>
        <position position="172"/>
    </location>
    <ligand>
        <name>Mn(2+)</name>
        <dbReference type="ChEBI" id="CHEBI:29035"/>
    </ligand>
</feature>
<feature type="binding site" evidence="1">
    <location>
        <begin position="175"/>
        <end position="177"/>
    </location>
    <ligand>
        <name>prenylated FMN</name>
        <dbReference type="ChEBI" id="CHEBI:87746"/>
    </ligand>
</feature>
<feature type="binding site" evidence="1">
    <location>
        <begin position="189"/>
        <end position="191"/>
    </location>
    <ligand>
        <name>prenylated FMN</name>
        <dbReference type="ChEBI" id="CHEBI:87746"/>
    </ligand>
</feature>
<feature type="binding site" evidence="1">
    <location>
        <begin position="194"/>
        <end position="195"/>
    </location>
    <ligand>
        <name>prenylated FMN</name>
        <dbReference type="ChEBI" id="CHEBI:87746"/>
    </ligand>
</feature>
<feature type="binding site" evidence="1">
    <location>
        <position position="238"/>
    </location>
    <ligand>
        <name>Mn(2+)</name>
        <dbReference type="ChEBI" id="CHEBI:29035"/>
    </ligand>
</feature>
<keyword id="KW-1003">Cell membrane</keyword>
<keyword id="KW-0210">Decarboxylase</keyword>
<keyword id="KW-0285">Flavoprotein</keyword>
<keyword id="KW-0288">FMN</keyword>
<keyword id="KW-0456">Lyase</keyword>
<keyword id="KW-0464">Manganese</keyword>
<keyword id="KW-0472">Membrane</keyword>
<keyword id="KW-0479">Metal-binding</keyword>
<keyword id="KW-0831">Ubiquinone biosynthesis</keyword>
<protein>
    <recommendedName>
        <fullName evidence="1">3-octaprenyl-4-hydroxybenzoate carboxy-lyase</fullName>
        <ecNumber evidence="1">4.1.1.98</ecNumber>
    </recommendedName>
    <alternativeName>
        <fullName evidence="1">Polyprenyl p-hydroxybenzoate decarboxylase</fullName>
    </alternativeName>
</protein>
<reference key="1">
    <citation type="journal article" date="2007" name="PLoS Genet.">
        <title>The complete genome sequence of Yersinia pseudotuberculosis IP31758, the causative agent of Far East scarlet-like fever.</title>
        <authorList>
            <person name="Eppinger M."/>
            <person name="Rosovitz M.J."/>
            <person name="Fricke W.F."/>
            <person name="Rasko D.A."/>
            <person name="Kokorina G."/>
            <person name="Fayolle C."/>
            <person name="Lindler L.E."/>
            <person name="Carniel E."/>
            <person name="Ravel J."/>
        </authorList>
    </citation>
    <scope>NUCLEOTIDE SEQUENCE [LARGE SCALE GENOMIC DNA]</scope>
    <source>
        <strain>IP 31758</strain>
    </source>
</reference>